<sequence>MKRTYQPSKRKRKKVHGFRTRMSTKNGRRVLASRRRKGRKVLSA</sequence>
<evidence type="ECO:0000255" key="1">
    <source>
        <dbReference type="HAMAP-Rule" id="MF_00391"/>
    </source>
</evidence>
<evidence type="ECO:0000256" key="2">
    <source>
        <dbReference type="SAM" id="MobiDB-lite"/>
    </source>
</evidence>
<evidence type="ECO:0000305" key="3"/>
<protein>
    <recommendedName>
        <fullName evidence="1">Large ribosomal subunit protein bL34</fullName>
    </recommendedName>
    <alternativeName>
        <fullName evidence="3">50S ribosomal protein L34</fullName>
    </alternativeName>
</protein>
<organism>
    <name type="scientific">Listeria welshimeri serovar 6b (strain ATCC 35897 / DSM 20650 / CCUG 15529 / CIP 8149 / NCTC 11857 / SLCC 5334 / V8)</name>
    <dbReference type="NCBI Taxonomy" id="386043"/>
    <lineage>
        <taxon>Bacteria</taxon>
        <taxon>Bacillati</taxon>
        <taxon>Bacillota</taxon>
        <taxon>Bacilli</taxon>
        <taxon>Bacillales</taxon>
        <taxon>Listeriaceae</taxon>
        <taxon>Listeria</taxon>
    </lineage>
</organism>
<proteinExistence type="inferred from homology"/>
<name>RL34_LISW6</name>
<reference key="1">
    <citation type="journal article" date="2006" name="J. Bacteriol.">
        <title>Whole-genome sequence of Listeria welshimeri reveals common steps in genome reduction with Listeria innocua as compared to Listeria monocytogenes.</title>
        <authorList>
            <person name="Hain T."/>
            <person name="Steinweg C."/>
            <person name="Kuenne C.T."/>
            <person name="Billion A."/>
            <person name="Ghai R."/>
            <person name="Chatterjee S.S."/>
            <person name="Domann E."/>
            <person name="Kaerst U."/>
            <person name="Goesmann A."/>
            <person name="Bekel T."/>
            <person name="Bartels D."/>
            <person name="Kaiser O."/>
            <person name="Meyer F."/>
            <person name="Puehler A."/>
            <person name="Weisshaar B."/>
            <person name="Wehland J."/>
            <person name="Liang C."/>
            <person name="Dandekar T."/>
            <person name="Lampidis R."/>
            <person name="Kreft J."/>
            <person name="Goebel W."/>
            <person name="Chakraborty T."/>
        </authorList>
    </citation>
    <scope>NUCLEOTIDE SEQUENCE [LARGE SCALE GENOMIC DNA]</scope>
    <source>
        <strain>ATCC 35897 / DSM 20650 / CCUG 15529 / CIP 8149 / NCTC 11857 / SLCC 5334 / V8</strain>
    </source>
</reference>
<feature type="chain" id="PRO_1000013367" description="Large ribosomal subunit protein bL34">
    <location>
        <begin position="1"/>
        <end position="44"/>
    </location>
</feature>
<feature type="region of interest" description="Disordered" evidence="2">
    <location>
        <begin position="1"/>
        <end position="44"/>
    </location>
</feature>
<feature type="compositionally biased region" description="Basic residues" evidence="2">
    <location>
        <begin position="1"/>
        <end position="19"/>
    </location>
</feature>
<feature type="compositionally biased region" description="Basic residues" evidence="2">
    <location>
        <begin position="26"/>
        <end position="44"/>
    </location>
</feature>
<comment type="similarity">
    <text evidence="1">Belongs to the bacterial ribosomal protein bL34 family.</text>
</comment>
<keyword id="KW-0687">Ribonucleoprotein</keyword>
<keyword id="KW-0689">Ribosomal protein</keyword>
<accession>A0AMG5</accession>
<dbReference type="EMBL" id="AM263198">
    <property type="protein sequence ID" value="CAK22197.1"/>
    <property type="molecule type" value="Genomic_DNA"/>
</dbReference>
<dbReference type="RefSeq" id="WP_003718062.1">
    <property type="nucleotide sequence ID" value="NC_008555.1"/>
</dbReference>
<dbReference type="SMR" id="A0AMG5"/>
<dbReference type="STRING" id="386043.lwe2779"/>
<dbReference type="GeneID" id="93240767"/>
<dbReference type="KEGG" id="lwe:lwe2779"/>
<dbReference type="eggNOG" id="COG0230">
    <property type="taxonomic scope" value="Bacteria"/>
</dbReference>
<dbReference type="HOGENOM" id="CLU_129938_2_0_9"/>
<dbReference type="OrthoDB" id="9804164at2"/>
<dbReference type="Proteomes" id="UP000000779">
    <property type="component" value="Chromosome"/>
</dbReference>
<dbReference type="GO" id="GO:1990904">
    <property type="term" value="C:ribonucleoprotein complex"/>
    <property type="evidence" value="ECO:0007669"/>
    <property type="project" value="UniProtKB-KW"/>
</dbReference>
<dbReference type="GO" id="GO:0005840">
    <property type="term" value="C:ribosome"/>
    <property type="evidence" value="ECO:0007669"/>
    <property type="project" value="UniProtKB-KW"/>
</dbReference>
<dbReference type="GO" id="GO:0003735">
    <property type="term" value="F:structural constituent of ribosome"/>
    <property type="evidence" value="ECO:0007669"/>
    <property type="project" value="InterPro"/>
</dbReference>
<dbReference type="GO" id="GO:0006412">
    <property type="term" value="P:translation"/>
    <property type="evidence" value="ECO:0007669"/>
    <property type="project" value="UniProtKB-UniRule"/>
</dbReference>
<dbReference type="FunFam" id="1.10.287.3980:FF:000001">
    <property type="entry name" value="Mitochondrial ribosomal protein L34"/>
    <property type="match status" value="1"/>
</dbReference>
<dbReference type="Gene3D" id="1.10.287.3980">
    <property type="match status" value="1"/>
</dbReference>
<dbReference type="HAMAP" id="MF_00391">
    <property type="entry name" value="Ribosomal_bL34"/>
    <property type="match status" value="1"/>
</dbReference>
<dbReference type="InterPro" id="IPR000271">
    <property type="entry name" value="Ribosomal_bL34"/>
</dbReference>
<dbReference type="InterPro" id="IPR020939">
    <property type="entry name" value="Ribosomal_bL34_CS"/>
</dbReference>
<dbReference type="NCBIfam" id="TIGR01030">
    <property type="entry name" value="rpmH_bact"/>
    <property type="match status" value="1"/>
</dbReference>
<dbReference type="PANTHER" id="PTHR14503:SF4">
    <property type="entry name" value="LARGE RIBOSOMAL SUBUNIT PROTEIN BL34M"/>
    <property type="match status" value="1"/>
</dbReference>
<dbReference type="PANTHER" id="PTHR14503">
    <property type="entry name" value="MITOCHONDRIAL RIBOSOMAL PROTEIN 34 FAMILY MEMBER"/>
    <property type="match status" value="1"/>
</dbReference>
<dbReference type="Pfam" id="PF00468">
    <property type="entry name" value="Ribosomal_L34"/>
    <property type="match status" value="1"/>
</dbReference>
<dbReference type="PROSITE" id="PS00784">
    <property type="entry name" value="RIBOSOMAL_L34"/>
    <property type="match status" value="1"/>
</dbReference>
<gene>
    <name evidence="1" type="primary">rpmH</name>
    <name type="ordered locus">lwe2779</name>
</gene>